<protein>
    <recommendedName>
        <fullName evidence="1">Dihydroorotase</fullName>
        <shortName evidence="1">DHOase</shortName>
        <ecNumber evidence="1">3.5.2.3</ecNumber>
    </recommendedName>
</protein>
<evidence type="ECO:0000255" key="1">
    <source>
        <dbReference type="HAMAP-Rule" id="MF_00220"/>
    </source>
</evidence>
<sequence length="421" mass="44919">MIIILKGGRVIDPRNRRDEDADIWMEDGQIIAPQETVPEDAKIYDLAGKWVVPGLIDMHVHLRDPGEEYKESIVTGTDAAAAGGFTAVACMPNTDPVNDTGSVTRYILEKSEGAAARVYPVGALSEGLKGESLAEYADMKHAGAVALTDDGNPVVSSQLMRRAMEYAKSHDMLVISHSEEPTLSKRGCMNEGLVATRLGLKGIPAVAESIMVQREIALAGLTGARLHIAHVSCIESLAAIRDAKKRGLPVTAETAPHYFSLTDDAVIGYDTHAKMNPPLRTEEHRQAIRQALADGTLDVIATDHAPHSIVEKEVTFEYAANGIVGLETSLGLSLALVRDGVLTPSRLVELMSSVPAQILSVAGGELGVGAIADVTVIDPELEHTFLIAEGRSRGANSPFDGWKLKGAATLTFVAGEESYCR</sequence>
<comment type="function">
    <text evidence="1">Catalyzes the reversible cyclization of carbamoyl aspartate to dihydroorotate.</text>
</comment>
<comment type="catalytic activity">
    <reaction evidence="1">
        <text>(S)-dihydroorotate + H2O = N-carbamoyl-L-aspartate + H(+)</text>
        <dbReference type="Rhea" id="RHEA:24296"/>
        <dbReference type="ChEBI" id="CHEBI:15377"/>
        <dbReference type="ChEBI" id="CHEBI:15378"/>
        <dbReference type="ChEBI" id="CHEBI:30864"/>
        <dbReference type="ChEBI" id="CHEBI:32814"/>
        <dbReference type="EC" id="3.5.2.3"/>
    </reaction>
</comment>
<comment type="cofactor">
    <cofactor evidence="1">
        <name>Zn(2+)</name>
        <dbReference type="ChEBI" id="CHEBI:29105"/>
    </cofactor>
    <text evidence="1">Binds 2 Zn(2+) ions per subunit.</text>
</comment>
<comment type="pathway">
    <text evidence="1">Pyrimidine metabolism; UMP biosynthesis via de novo pathway; (S)-dihydroorotate from bicarbonate: step 3/3.</text>
</comment>
<comment type="similarity">
    <text evidence="1">Belongs to the metallo-dependent hydrolases superfamily. DHOase family. Class I DHOase subfamily.</text>
</comment>
<accession>Q6AS41</accession>
<organism>
    <name type="scientific">Desulfotalea psychrophila (strain LSv54 / DSM 12343)</name>
    <dbReference type="NCBI Taxonomy" id="177439"/>
    <lineage>
        <taxon>Bacteria</taxon>
        <taxon>Pseudomonadati</taxon>
        <taxon>Thermodesulfobacteriota</taxon>
        <taxon>Desulfobulbia</taxon>
        <taxon>Desulfobulbales</taxon>
        <taxon>Desulfocapsaceae</taxon>
        <taxon>Desulfotalea</taxon>
    </lineage>
</organism>
<feature type="chain" id="PRO_1000024081" description="Dihydroorotase">
    <location>
        <begin position="1"/>
        <end position="421"/>
    </location>
</feature>
<feature type="active site" evidence="1">
    <location>
        <position position="303"/>
    </location>
</feature>
<feature type="binding site" evidence="1">
    <location>
        <position position="59"/>
    </location>
    <ligand>
        <name>Zn(2+)</name>
        <dbReference type="ChEBI" id="CHEBI:29105"/>
        <label>1</label>
    </ligand>
</feature>
<feature type="binding site" evidence="1">
    <location>
        <begin position="61"/>
        <end position="63"/>
    </location>
    <ligand>
        <name>substrate</name>
    </ligand>
</feature>
<feature type="binding site" evidence="1">
    <location>
        <position position="61"/>
    </location>
    <ligand>
        <name>Zn(2+)</name>
        <dbReference type="ChEBI" id="CHEBI:29105"/>
        <label>1</label>
    </ligand>
</feature>
<feature type="binding site" evidence="1">
    <location>
        <position position="93"/>
    </location>
    <ligand>
        <name>substrate</name>
    </ligand>
</feature>
<feature type="binding site" evidence="1">
    <location>
        <position position="150"/>
    </location>
    <ligand>
        <name>Zn(2+)</name>
        <dbReference type="ChEBI" id="CHEBI:29105"/>
        <label>1</label>
    </ligand>
</feature>
<feature type="binding site" evidence="1">
    <location>
        <position position="150"/>
    </location>
    <ligand>
        <name>Zn(2+)</name>
        <dbReference type="ChEBI" id="CHEBI:29105"/>
        <label>2</label>
    </ligand>
</feature>
<feature type="binding site" evidence="1">
    <location>
        <position position="177"/>
    </location>
    <ligand>
        <name>Zn(2+)</name>
        <dbReference type="ChEBI" id="CHEBI:29105"/>
        <label>2</label>
    </ligand>
</feature>
<feature type="binding site" evidence="1">
    <location>
        <position position="230"/>
    </location>
    <ligand>
        <name>Zn(2+)</name>
        <dbReference type="ChEBI" id="CHEBI:29105"/>
        <label>2</label>
    </ligand>
</feature>
<feature type="binding site" evidence="1">
    <location>
        <position position="276"/>
    </location>
    <ligand>
        <name>substrate</name>
    </ligand>
</feature>
<feature type="binding site" evidence="1">
    <location>
        <position position="303"/>
    </location>
    <ligand>
        <name>Zn(2+)</name>
        <dbReference type="ChEBI" id="CHEBI:29105"/>
        <label>1</label>
    </ligand>
</feature>
<feature type="binding site" evidence="1">
    <location>
        <position position="307"/>
    </location>
    <ligand>
        <name>substrate</name>
    </ligand>
</feature>
<dbReference type="EC" id="3.5.2.3" evidence="1"/>
<dbReference type="EMBL" id="CR522870">
    <property type="protein sequence ID" value="CAG34834.1"/>
    <property type="molecule type" value="Genomic_DNA"/>
</dbReference>
<dbReference type="RefSeq" id="WP_011187350.1">
    <property type="nucleotide sequence ID" value="NC_006138.1"/>
</dbReference>
<dbReference type="SMR" id="Q6AS41"/>
<dbReference type="STRING" id="177439.DP0105"/>
<dbReference type="KEGG" id="dps:DP0105"/>
<dbReference type="eggNOG" id="COG0044">
    <property type="taxonomic scope" value="Bacteria"/>
</dbReference>
<dbReference type="HOGENOM" id="CLU_015572_1_0_7"/>
<dbReference type="OrthoDB" id="9803027at2"/>
<dbReference type="UniPathway" id="UPA00070">
    <property type="reaction ID" value="UER00117"/>
</dbReference>
<dbReference type="Proteomes" id="UP000000602">
    <property type="component" value="Chromosome"/>
</dbReference>
<dbReference type="GO" id="GO:0005737">
    <property type="term" value="C:cytoplasm"/>
    <property type="evidence" value="ECO:0007669"/>
    <property type="project" value="TreeGrafter"/>
</dbReference>
<dbReference type="GO" id="GO:0004038">
    <property type="term" value="F:allantoinase activity"/>
    <property type="evidence" value="ECO:0007669"/>
    <property type="project" value="TreeGrafter"/>
</dbReference>
<dbReference type="GO" id="GO:0004151">
    <property type="term" value="F:dihydroorotase activity"/>
    <property type="evidence" value="ECO:0007669"/>
    <property type="project" value="UniProtKB-UniRule"/>
</dbReference>
<dbReference type="GO" id="GO:0008270">
    <property type="term" value="F:zinc ion binding"/>
    <property type="evidence" value="ECO:0007669"/>
    <property type="project" value="UniProtKB-UniRule"/>
</dbReference>
<dbReference type="GO" id="GO:0044205">
    <property type="term" value="P:'de novo' UMP biosynthetic process"/>
    <property type="evidence" value="ECO:0007669"/>
    <property type="project" value="UniProtKB-UniRule"/>
</dbReference>
<dbReference type="GO" id="GO:0006145">
    <property type="term" value="P:purine nucleobase catabolic process"/>
    <property type="evidence" value="ECO:0007669"/>
    <property type="project" value="TreeGrafter"/>
</dbReference>
<dbReference type="CDD" id="cd01317">
    <property type="entry name" value="DHOase_IIa"/>
    <property type="match status" value="1"/>
</dbReference>
<dbReference type="Gene3D" id="3.20.20.140">
    <property type="entry name" value="Metal-dependent hydrolases"/>
    <property type="match status" value="1"/>
</dbReference>
<dbReference type="Gene3D" id="2.30.40.10">
    <property type="entry name" value="Urease, subunit C, domain 1"/>
    <property type="match status" value="1"/>
</dbReference>
<dbReference type="HAMAP" id="MF_00220_B">
    <property type="entry name" value="PyrC_classI_B"/>
    <property type="match status" value="1"/>
</dbReference>
<dbReference type="InterPro" id="IPR006680">
    <property type="entry name" value="Amidohydro-rel"/>
</dbReference>
<dbReference type="InterPro" id="IPR004722">
    <property type="entry name" value="DHOase"/>
</dbReference>
<dbReference type="InterPro" id="IPR050138">
    <property type="entry name" value="DHOase/Allantoinase_Hydrolase"/>
</dbReference>
<dbReference type="InterPro" id="IPR002195">
    <property type="entry name" value="Dihydroorotase_CS"/>
</dbReference>
<dbReference type="InterPro" id="IPR011059">
    <property type="entry name" value="Metal-dep_hydrolase_composite"/>
</dbReference>
<dbReference type="InterPro" id="IPR032466">
    <property type="entry name" value="Metal_Hydrolase"/>
</dbReference>
<dbReference type="NCBIfam" id="TIGR00857">
    <property type="entry name" value="pyrC_multi"/>
    <property type="match status" value="1"/>
</dbReference>
<dbReference type="PANTHER" id="PTHR43668">
    <property type="entry name" value="ALLANTOINASE"/>
    <property type="match status" value="1"/>
</dbReference>
<dbReference type="PANTHER" id="PTHR43668:SF2">
    <property type="entry name" value="ALLANTOINASE"/>
    <property type="match status" value="1"/>
</dbReference>
<dbReference type="Pfam" id="PF01979">
    <property type="entry name" value="Amidohydro_1"/>
    <property type="match status" value="1"/>
</dbReference>
<dbReference type="SUPFAM" id="SSF51338">
    <property type="entry name" value="Composite domain of metallo-dependent hydrolases"/>
    <property type="match status" value="1"/>
</dbReference>
<dbReference type="SUPFAM" id="SSF51556">
    <property type="entry name" value="Metallo-dependent hydrolases"/>
    <property type="match status" value="1"/>
</dbReference>
<dbReference type="PROSITE" id="PS00482">
    <property type="entry name" value="DIHYDROOROTASE_1"/>
    <property type="match status" value="1"/>
</dbReference>
<dbReference type="PROSITE" id="PS00483">
    <property type="entry name" value="DIHYDROOROTASE_2"/>
    <property type="match status" value="1"/>
</dbReference>
<name>PYRC_DESPS</name>
<gene>
    <name evidence="1" type="primary">pyrC</name>
    <name type="ordered locus">DP0105</name>
</gene>
<keyword id="KW-0378">Hydrolase</keyword>
<keyword id="KW-0479">Metal-binding</keyword>
<keyword id="KW-0665">Pyrimidine biosynthesis</keyword>
<keyword id="KW-1185">Reference proteome</keyword>
<keyword id="KW-0862">Zinc</keyword>
<reference key="1">
    <citation type="journal article" date="2004" name="Environ. Microbiol.">
        <title>The genome of Desulfotalea psychrophila, a sulfate-reducing bacterium from permanently cold Arctic sediments.</title>
        <authorList>
            <person name="Rabus R."/>
            <person name="Ruepp A."/>
            <person name="Frickey T."/>
            <person name="Rattei T."/>
            <person name="Fartmann B."/>
            <person name="Stark M."/>
            <person name="Bauer M."/>
            <person name="Zibat A."/>
            <person name="Lombardot T."/>
            <person name="Becker I."/>
            <person name="Amann J."/>
            <person name="Gellner K."/>
            <person name="Teeling H."/>
            <person name="Leuschner W.D."/>
            <person name="Gloeckner F.-O."/>
            <person name="Lupas A.N."/>
            <person name="Amann R."/>
            <person name="Klenk H.-P."/>
        </authorList>
    </citation>
    <scope>NUCLEOTIDE SEQUENCE [LARGE SCALE GENOMIC DNA]</scope>
    <source>
        <strain>DSM 12343 / LSv54</strain>
    </source>
</reference>
<proteinExistence type="inferred from homology"/>